<gene>
    <name type="primary">COX5A</name>
</gene>
<organism>
    <name type="scientific">Macaca mulatta</name>
    <name type="common">Rhesus macaque</name>
    <dbReference type="NCBI Taxonomy" id="9544"/>
    <lineage>
        <taxon>Eukaryota</taxon>
        <taxon>Metazoa</taxon>
        <taxon>Chordata</taxon>
        <taxon>Craniata</taxon>
        <taxon>Vertebrata</taxon>
        <taxon>Euteleostomi</taxon>
        <taxon>Mammalia</taxon>
        <taxon>Eutheria</taxon>
        <taxon>Euarchontoglires</taxon>
        <taxon>Primates</taxon>
        <taxon>Haplorrhini</taxon>
        <taxon>Catarrhini</taxon>
        <taxon>Cercopithecidae</taxon>
        <taxon>Cercopithecinae</taxon>
        <taxon>Macaca</taxon>
    </lineage>
</organism>
<accession>Q53CF8</accession>
<keyword id="KW-0007">Acetylation</keyword>
<keyword id="KW-0349">Heme</keyword>
<keyword id="KW-0408">Iron</keyword>
<keyword id="KW-0472">Membrane</keyword>
<keyword id="KW-0479">Metal-binding</keyword>
<keyword id="KW-0496">Mitochondrion</keyword>
<keyword id="KW-0999">Mitochondrion inner membrane</keyword>
<keyword id="KW-0597">Phosphoprotein</keyword>
<keyword id="KW-1185">Reference proteome</keyword>
<keyword id="KW-0809">Transit peptide</keyword>
<keyword id="KW-0832">Ubl conjugation</keyword>
<reference key="1">
    <citation type="journal article" date="2005" name="Proc. Natl. Acad. Sci. U.S.A.">
        <title>Rapid electrostatic evolution at the binding site for cytochrome c on cytochrome c oxidase in anthropoid primates.</title>
        <authorList>
            <person name="Schmidt T.R."/>
            <person name="Wildman D.E."/>
            <person name="Uddin M."/>
            <person name="Opazo J.C."/>
            <person name="Goodman M."/>
            <person name="Grossman L.I."/>
        </authorList>
    </citation>
    <scope>NUCLEOTIDE SEQUENCE [MRNA]</scope>
</reference>
<name>COX5A_MACMU</name>
<sequence length="150" mass="16669">MLGAALRRCAVAATTWAGPRGLLHSARTPGPAAAIQSVRCYSHGSHETDEEFDARWVTYFNKPDIDAWELRKGINTLVTYDLVPEPKIIDAALRACRRLNDFASTVRILEAVKDKAGPHKEIYPYVIQELRPTLNELGISTPEELGLDKV</sequence>
<evidence type="ECO:0000250" key="1">
    <source>
        <dbReference type="UniProtKB" id="P00426"/>
    </source>
</evidence>
<evidence type="ECO:0000250" key="2">
    <source>
        <dbReference type="UniProtKB" id="P00427"/>
    </source>
</evidence>
<evidence type="ECO:0000250" key="3">
    <source>
        <dbReference type="UniProtKB" id="P12787"/>
    </source>
</evidence>
<evidence type="ECO:0000250" key="4">
    <source>
        <dbReference type="UniProtKB" id="P20674"/>
    </source>
</evidence>
<evidence type="ECO:0000305" key="5"/>
<comment type="function">
    <text evidence="2">Component of the cytochrome c oxidase, the last enzyme in the mitochondrial electron transport chain which drives oxidative phosphorylation. The respiratory chain contains 3 multisubunit complexes succinate dehydrogenase (complex II, CII), ubiquinol-cytochrome c oxidoreductase (cytochrome b-c1 complex, complex III, CIII) and cytochrome c oxidase (complex IV, CIV), that cooperate to transfer electrons derived from NADH and succinate to molecular oxygen, creating an electrochemical gradient over the inner membrane that drives transmembrane transport and the ATP synthase. Cytochrome c oxidase is the component of the respiratory chain that catalyzes the reduction of oxygen to water. Electrons originating from reduced cytochrome c in the intermembrane space (IMS) are transferred via the dinuclear copper A center (CU(A)) of subunit 2 and heme A of subunit 1 to the active site in subunit 1, a binuclear center (BNC) formed by heme A3 and copper B (CU(B)). The BNC reduces molecular oxygen to 2 water molecules using 4 electrons from cytochrome c in the IMS and 4 protons from the mitochondrial matrix.</text>
</comment>
<comment type="pathway">
    <text evidence="2">Energy metabolism; oxidative phosphorylation.</text>
</comment>
<comment type="subunit">
    <text evidence="1 4">Component of the cytochrome c oxidase (complex IV, CIV), a multisubunit enzyme composed of 14 subunits. The complex is composed of a catalytic core of 3 subunits MT-CO1, MT-CO2 and MT-CO3, encoded in the mitochondrial DNA, and 11 supernumerary subunits COX4I, COX5A, COX5B, COX6A, COX6B, COX6C, COX7A, COX7B, COX7C, COX8 and NDUFA4, which are encoded in the nuclear genome. The complex exists as a monomer or a dimer and forms supercomplexes (SCs) in the inner mitochondrial membrane with NADH-ubiquinone oxidoreductase (complex I, CI) and ubiquinol-cytochrome c oxidoreductase (cytochrome b-c1 complex, complex III, CIII), resulting in different assemblies (supercomplex SCI(1)III(2)IV(1) and megacomplex MCI(2)III(2)IV(2)) (By similarity). Interacts with AFG1L (By similarity). Interacts with RAB5IF (By similarity).</text>
</comment>
<comment type="subcellular location">
    <subcellularLocation>
        <location evidence="1">Mitochondrion inner membrane</location>
        <topology evidence="1">Peripheral membrane protein</topology>
        <orientation evidence="1">Matrix side</orientation>
    </subcellularLocation>
</comment>
<comment type="PTM">
    <text evidence="4">In response to mitochondrial stress, the precursor protein is ubiquitinated by the SIFI complex in the cytoplasm before mitochondrial import, leading to its degradation. Within the SIFI complex, UBR4 initiates ubiquitin chain that are further elongated or branched by KCMF1.</text>
</comment>
<comment type="similarity">
    <text evidence="5">Belongs to the cytochrome c oxidase subunit 5A family.</text>
</comment>
<protein>
    <recommendedName>
        <fullName>Cytochrome c oxidase subunit 5A, mitochondrial</fullName>
    </recommendedName>
    <alternativeName>
        <fullName>Cytochrome c oxidase polypeptide Va</fullName>
    </alternativeName>
</protein>
<dbReference type="EMBL" id="AY585861">
    <property type="protein sequence ID" value="AAW03189.1"/>
    <property type="molecule type" value="mRNA"/>
</dbReference>
<dbReference type="RefSeq" id="NP_001035369.1">
    <property type="nucleotide sequence ID" value="NM_001040279.1"/>
</dbReference>
<dbReference type="SMR" id="Q53CF8"/>
<dbReference type="FunCoup" id="Q53CF8">
    <property type="interactions" value="1267"/>
</dbReference>
<dbReference type="STRING" id="9544.ENSMMUP00000052933"/>
<dbReference type="PaxDb" id="9544-ENSMMUP00000015328"/>
<dbReference type="Ensembl" id="ENSMMUT00000071252.2">
    <property type="protein sequence ID" value="ENSMMUP00000052933.1"/>
    <property type="gene ID" value="ENSMMUG00000011677.4"/>
</dbReference>
<dbReference type="GeneID" id="692061"/>
<dbReference type="KEGG" id="mcc:692061"/>
<dbReference type="CTD" id="9377"/>
<dbReference type="VEuPathDB" id="HostDB:ENSMMUG00000011677"/>
<dbReference type="VGNC" id="VGNC:84327">
    <property type="gene designation" value="COX5A"/>
</dbReference>
<dbReference type="eggNOG" id="KOG4077">
    <property type="taxonomic scope" value="Eukaryota"/>
</dbReference>
<dbReference type="GeneTree" id="ENSGT00390000001424"/>
<dbReference type="HOGENOM" id="CLU_099086_2_0_1"/>
<dbReference type="InParanoid" id="Q53CF8"/>
<dbReference type="OMA" id="MEKWPAD"/>
<dbReference type="OrthoDB" id="5778907at2759"/>
<dbReference type="UniPathway" id="UPA00705"/>
<dbReference type="Proteomes" id="UP000006718">
    <property type="component" value="Chromosome 7"/>
</dbReference>
<dbReference type="Bgee" id="ENSMMUG00000011677">
    <property type="expression patterns" value="Expressed in skeletal muscle tissue and 22 other cell types or tissues"/>
</dbReference>
<dbReference type="ExpressionAtlas" id="Q53CF8">
    <property type="expression patterns" value="baseline and differential"/>
</dbReference>
<dbReference type="GO" id="GO:0005743">
    <property type="term" value="C:mitochondrial inner membrane"/>
    <property type="evidence" value="ECO:0007669"/>
    <property type="project" value="UniProtKB-SubCell"/>
</dbReference>
<dbReference type="GO" id="GO:0045277">
    <property type="term" value="C:respiratory chain complex IV"/>
    <property type="evidence" value="ECO:0000318"/>
    <property type="project" value="GO_Central"/>
</dbReference>
<dbReference type="GO" id="GO:0046872">
    <property type="term" value="F:metal ion binding"/>
    <property type="evidence" value="ECO:0007669"/>
    <property type="project" value="UniProtKB-KW"/>
</dbReference>
<dbReference type="GO" id="GO:0006123">
    <property type="term" value="P:mitochondrial electron transport, cytochrome c to oxygen"/>
    <property type="evidence" value="ECO:0000318"/>
    <property type="project" value="GO_Central"/>
</dbReference>
<dbReference type="CDD" id="cd00923">
    <property type="entry name" value="Cyt_c_Oxidase_Va"/>
    <property type="match status" value="1"/>
</dbReference>
<dbReference type="FunFam" id="1.25.40.40:FF:000002">
    <property type="entry name" value="cytochrome c oxidase subunit 5A, mitochondrial"/>
    <property type="match status" value="1"/>
</dbReference>
<dbReference type="Gene3D" id="1.25.40.40">
    <property type="entry name" value="Cytochrome c oxidase, subunit Va/VI"/>
    <property type="match status" value="1"/>
</dbReference>
<dbReference type="InterPro" id="IPR003204">
    <property type="entry name" value="Cyt_c_oxidase_su5A/6"/>
</dbReference>
<dbReference type="InterPro" id="IPR036545">
    <property type="entry name" value="Cyt_c_oxidase_su5A/6_sf"/>
</dbReference>
<dbReference type="PANTHER" id="PTHR14200">
    <property type="entry name" value="CYTOCHROME C OXIDASE POLYPEPTIDE"/>
    <property type="match status" value="1"/>
</dbReference>
<dbReference type="PANTHER" id="PTHR14200:SF16">
    <property type="entry name" value="CYTOCHROME C OXIDASE SUBUNIT 5A, MITOCHONDRIAL"/>
    <property type="match status" value="1"/>
</dbReference>
<dbReference type="Pfam" id="PF02284">
    <property type="entry name" value="COX5A"/>
    <property type="match status" value="1"/>
</dbReference>
<dbReference type="SUPFAM" id="SSF48479">
    <property type="entry name" value="Cytochrome c oxidase subunit E"/>
    <property type="match status" value="1"/>
</dbReference>
<feature type="transit peptide" description="Mitochondrion" evidence="1">
    <location>
        <begin position="1"/>
        <end position="41"/>
    </location>
</feature>
<feature type="chain" id="PRO_0000253608" description="Cytochrome c oxidase subunit 5A, mitochondrial">
    <location>
        <begin position="42"/>
        <end position="150"/>
    </location>
</feature>
<feature type="short sequence motif" description="SIFI-degron" evidence="4">
    <location>
        <begin position="2"/>
        <end position="20"/>
    </location>
</feature>
<feature type="modified residue" description="N6-acetyllysine" evidence="3">
    <location>
        <position position="87"/>
    </location>
</feature>
<feature type="modified residue" description="N6-acetyllysine" evidence="3">
    <location>
        <position position="113"/>
    </location>
</feature>
<feature type="modified residue" description="Phosphothreonine" evidence="4">
    <location>
        <position position="141"/>
    </location>
</feature>
<proteinExistence type="evidence at transcript level"/>